<proteinExistence type="inferred from homology"/>
<keyword id="KW-0963">Cytoplasm</keyword>
<keyword id="KW-0489">Methyltransferase</keyword>
<keyword id="KW-0545">Nucleotide biosynthesis</keyword>
<keyword id="KW-1185">Reference proteome</keyword>
<keyword id="KW-0808">Transferase</keyword>
<organism>
    <name type="scientific">Sinorhizobium fredii (strain NBRC 101917 / NGR234)</name>
    <dbReference type="NCBI Taxonomy" id="394"/>
    <lineage>
        <taxon>Bacteria</taxon>
        <taxon>Pseudomonadati</taxon>
        <taxon>Pseudomonadota</taxon>
        <taxon>Alphaproteobacteria</taxon>
        <taxon>Hyphomicrobiales</taxon>
        <taxon>Rhizobiaceae</taxon>
        <taxon>Sinorhizobium/Ensifer group</taxon>
        <taxon>Sinorhizobium</taxon>
    </lineage>
</organism>
<accession>C3MEE8</accession>
<sequence length="305" mass="35464">MTRHPEYQYLDLMSELLETGDRRMDRTGEGTLSLFGKQMRFKLSDGTIPIFTTKKVYWKTSVKEMLWFLTGQTNISSLLRENVRIWTDWPLAKYRKATGETISQEQFEDRIVASDEFASEWGDLGPVYGKQWRRWVDNDGQEHDQIATVISTLKTNPTSRRILFHAWNVGELDRMALHPCHMTYQFHVSWPNGQDGRPQLSMMVHQRSCDIFLGAPFNICQQAVLLAMIAQQVDMDRGELVWLGGDTHLYLNHLDQARLQLSRKPKPFPKLEIKRRPASIDGYTIDDFEVSEYQSHERIEAPVAV</sequence>
<protein>
    <recommendedName>
        <fullName evidence="1">Thymidylate synthase</fullName>
        <shortName evidence="1">TS</shortName>
        <shortName evidence="1">TSase</shortName>
        <ecNumber evidence="1">2.1.1.45</ecNumber>
    </recommendedName>
</protein>
<reference key="1">
    <citation type="journal article" date="2009" name="Appl. Environ. Microbiol.">
        <title>Rhizobium sp. strain NGR234 possesses a remarkable number of secretion systems.</title>
        <authorList>
            <person name="Schmeisser C."/>
            <person name="Liesegang H."/>
            <person name="Krysciak D."/>
            <person name="Bakkou N."/>
            <person name="Le Quere A."/>
            <person name="Wollherr A."/>
            <person name="Heinemeyer I."/>
            <person name="Morgenstern B."/>
            <person name="Pommerening-Roeser A."/>
            <person name="Flores M."/>
            <person name="Palacios R."/>
            <person name="Brenner S."/>
            <person name="Gottschalk G."/>
            <person name="Schmitz R.A."/>
            <person name="Broughton W.J."/>
            <person name="Perret X."/>
            <person name="Strittmatter A.W."/>
            <person name="Streit W.R."/>
        </authorList>
    </citation>
    <scope>NUCLEOTIDE SEQUENCE [LARGE SCALE GENOMIC DNA]</scope>
    <source>
        <strain>NBRC 101917 / NGR234</strain>
    </source>
</reference>
<dbReference type="EC" id="2.1.1.45" evidence="1"/>
<dbReference type="EMBL" id="CP001389">
    <property type="protein sequence ID" value="ACP25817.1"/>
    <property type="molecule type" value="Genomic_DNA"/>
</dbReference>
<dbReference type="RefSeq" id="WP_012708580.1">
    <property type="nucleotide sequence ID" value="NC_012587.1"/>
</dbReference>
<dbReference type="RefSeq" id="YP_002826570.1">
    <property type="nucleotide sequence ID" value="NC_012587.1"/>
</dbReference>
<dbReference type="SMR" id="C3MEE8"/>
<dbReference type="STRING" id="394.NGR_c20540"/>
<dbReference type="KEGG" id="rhi:NGR_c20540"/>
<dbReference type="PATRIC" id="fig|394.7.peg.4878"/>
<dbReference type="eggNOG" id="COG0207">
    <property type="taxonomic scope" value="Bacteria"/>
</dbReference>
<dbReference type="HOGENOM" id="CLU_021669_0_0_5"/>
<dbReference type="OrthoDB" id="9774633at2"/>
<dbReference type="UniPathway" id="UPA00575"/>
<dbReference type="Proteomes" id="UP000001054">
    <property type="component" value="Chromosome"/>
</dbReference>
<dbReference type="GO" id="GO:0005829">
    <property type="term" value="C:cytosol"/>
    <property type="evidence" value="ECO:0007669"/>
    <property type="project" value="TreeGrafter"/>
</dbReference>
<dbReference type="GO" id="GO:0004799">
    <property type="term" value="F:thymidylate synthase activity"/>
    <property type="evidence" value="ECO:0007669"/>
    <property type="project" value="UniProtKB-UniRule"/>
</dbReference>
<dbReference type="GO" id="GO:0006231">
    <property type="term" value="P:dTMP biosynthetic process"/>
    <property type="evidence" value="ECO:0007669"/>
    <property type="project" value="UniProtKB-UniRule"/>
</dbReference>
<dbReference type="GO" id="GO:0006235">
    <property type="term" value="P:dTTP biosynthetic process"/>
    <property type="evidence" value="ECO:0007669"/>
    <property type="project" value="UniProtKB-UniRule"/>
</dbReference>
<dbReference type="GO" id="GO:0032259">
    <property type="term" value="P:methylation"/>
    <property type="evidence" value="ECO:0007669"/>
    <property type="project" value="UniProtKB-KW"/>
</dbReference>
<dbReference type="CDD" id="cd00351">
    <property type="entry name" value="TS_Pyrimidine_HMase"/>
    <property type="match status" value="1"/>
</dbReference>
<dbReference type="Gene3D" id="3.30.572.10">
    <property type="entry name" value="Thymidylate synthase/dCMP hydroxymethylase domain"/>
    <property type="match status" value="1"/>
</dbReference>
<dbReference type="HAMAP" id="MF_00008">
    <property type="entry name" value="Thymidy_synth_bact"/>
    <property type="match status" value="1"/>
</dbReference>
<dbReference type="InterPro" id="IPR045097">
    <property type="entry name" value="Thymidate_synth/dCMP_Mease"/>
</dbReference>
<dbReference type="InterPro" id="IPR023451">
    <property type="entry name" value="Thymidate_synth/dCMP_Mease_dom"/>
</dbReference>
<dbReference type="InterPro" id="IPR036926">
    <property type="entry name" value="Thymidate_synth/dCMP_Mease_sf"/>
</dbReference>
<dbReference type="InterPro" id="IPR000398">
    <property type="entry name" value="Thymidylate_synthase"/>
</dbReference>
<dbReference type="InterPro" id="IPR020940">
    <property type="entry name" value="Thymidylate_synthase_AS"/>
</dbReference>
<dbReference type="NCBIfam" id="TIGR03284">
    <property type="entry name" value="thym_sym"/>
    <property type="match status" value="1"/>
</dbReference>
<dbReference type="PANTHER" id="PTHR11548">
    <property type="entry name" value="THYMIDYLATE SYNTHASE 1"/>
    <property type="match status" value="1"/>
</dbReference>
<dbReference type="PANTHER" id="PTHR11548:SF1">
    <property type="entry name" value="THYMIDYLATE SYNTHASE 1"/>
    <property type="match status" value="1"/>
</dbReference>
<dbReference type="Pfam" id="PF00303">
    <property type="entry name" value="Thymidylat_synt"/>
    <property type="match status" value="1"/>
</dbReference>
<dbReference type="PRINTS" id="PR00108">
    <property type="entry name" value="THYMDSNTHASE"/>
</dbReference>
<dbReference type="SUPFAM" id="SSF55831">
    <property type="entry name" value="Thymidylate synthase/dCMP hydroxymethylase"/>
    <property type="match status" value="1"/>
</dbReference>
<dbReference type="PROSITE" id="PS00091">
    <property type="entry name" value="THYMIDYLATE_SYNTHASE"/>
    <property type="match status" value="1"/>
</dbReference>
<name>TYSY_SINFN</name>
<evidence type="ECO:0000255" key="1">
    <source>
        <dbReference type="HAMAP-Rule" id="MF_00008"/>
    </source>
</evidence>
<comment type="function">
    <text evidence="1">Catalyzes the reductive methylation of 2'-deoxyuridine-5'-monophosphate (dUMP) to 2'-deoxythymidine-5'-monophosphate (dTMP) while utilizing 5,10-methylenetetrahydrofolate (mTHF) as the methyl donor and reductant in the reaction, yielding dihydrofolate (DHF) as a by-product. This enzymatic reaction provides an intracellular de novo source of dTMP, an essential precursor for DNA biosynthesis.</text>
</comment>
<comment type="catalytic activity">
    <reaction evidence="1">
        <text>dUMP + (6R)-5,10-methylene-5,6,7,8-tetrahydrofolate = 7,8-dihydrofolate + dTMP</text>
        <dbReference type="Rhea" id="RHEA:12104"/>
        <dbReference type="ChEBI" id="CHEBI:15636"/>
        <dbReference type="ChEBI" id="CHEBI:57451"/>
        <dbReference type="ChEBI" id="CHEBI:63528"/>
        <dbReference type="ChEBI" id="CHEBI:246422"/>
        <dbReference type="EC" id="2.1.1.45"/>
    </reaction>
</comment>
<comment type="pathway">
    <text evidence="1">Pyrimidine metabolism; dTTP biosynthesis.</text>
</comment>
<comment type="subunit">
    <text evidence="1">Homodimer.</text>
</comment>
<comment type="subcellular location">
    <subcellularLocation>
        <location evidence="1">Cytoplasm</location>
    </subcellularLocation>
</comment>
<comment type="similarity">
    <text evidence="1">Belongs to the thymidylate synthase family. Bacterial-type ThyA subfamily.</text>
</comment>
<gene>
    <name evidence="1" type="primary">thyA</name>
    <name type="ordered locus">NGR_c20540</name>
</gene>
<feature type="chain" id="PRO_1000197257" description="Thymidylate synthase">
    <location>
        <begin position="1"/>
        <end position="305"/>
    </location>
</feature>
<feature type="active site" description="Nucleophile" evidence="1">
    <location>
        <position position="180"/>
    </location>
</feature>
<feature type="binding site" description="in other chain" evidence="1">
    <location>
        <position position="26"/>
    </location>
    <ligand>
        <name>dUMP</name>
        <dbReference type="ChEBI" id="CHEBI:246422"/>
        <note>ligand shared between dimeric partners</note>
    </ligand>
</feature>
<feature type="binding site" evidence="1">
    <location>
        <begin position="160"/>
        <end position="161"/>
    </location>
    <ligand>
        <name>dUMP</name>
        <dbReference type="ChEBI" id="CHEBI:246422"/>
        <note>ligand shared between dimeric partners</note>
    </ligand>
</feature>
<feature type="binding site" description="in other chain" evidence="1">
    <location>
        <begin position="207"/>
        <end position="210"/>
    </location>
    <ligand>
        <name>dUMP</name>
        <dbReference type="ChEBI" id="CHEBI:246422"/>
        <note>ligand shared between dimeric partners</note>
    </ligand>
</feature>
<feature type="binding site" evidence="1">
    <location>
        <position position="210"/>
    </location>
    <ligand>
        <name>(6R)-5,10-methylene-5,6,7,8-tetrahydrofolate</name>
        <dbReference type="ChEBI" id="CHEBI:15636"/>
    </ligand>
</feature>
<feature type="binding site" description="in other chain" evidence="1">
    <location>
        <position position="218"/>
    </location>
    <ligand>
        <name>dUMP</name>
        <dbReference type="ChEBI" id="CHEBI:246422"/>
        <note>ligand shared between dimeric partners</note>
    </ligand>
</feature>
<feature type="binding site" description="in other chain" evidence="1">
    <location>
        <begin position="248"/>
        <end position="250"/>
    </location>
    <ligand>
        <name>dUMP</name>
        <dbReference type="ChEBI" id="CHEBI:246422"/>
        <note>ligand shared between dimeric partners</note>
    </ligand>
</feature>
<feature type="binding site" evidence="1">
    <location>
        <position position="304"/>
    </location>
    <ligand>
        <name>(6R)-5,10-methylene-5,6,7,8-tetrahydrofolate</name>
        <dbReference type="ChEBI" id="CHEBI:15636"/>
    </ligand>
</feature>